<reference key="1">
    <citation type="journal article" date="2008" name="Appl. Environ. Microbiol.">
        <title>Genome of the epsilonproteobacterial chemolithoautotroph Sulfurimonas denitrificans.</title>
        <authorList>
            <person name="Sievert S.M."/>
            <person name="Scott K.M."/>
            <person name="Klotz M.G."/>
            <person name="Chain P.S.G."/>
            <person name="Hauser L.J."/>
            <person name="Hemp J."/>
            <person name="Huegler M."/>
            <person name="Land M."/>
            <person name="Lapidus A."/>
            <person name="Larimer F.W."/>
            <person name="Lucas S."/>
            <person name="Malfatti S.A."/>
            <person name="Meyer F."/>
            <person name="Paulsen I.T."/>
            <person name="Ren Q."/>
            <person name="Simon J."/>
            <person name="Bailey K."/>
            <person name="Diaz E."/>
            <person name="Fitzpatrick K.A."/>
            <person name="Glover B."/>
            <person name="Gwatney N."/>
            <person name="Korajkic A."/>
            <person name="Long A."/>
            <person name="Mobberley J.M."/>
            <person name="Pantry S.N."/>
            <person name="Pazder G."/>
            <person name="Peterson S."/>
            <person name="Quintanilla J.D."/>
            <person name="Sprinkle R."/>
            <person name="Stephens J."/>
            <person name="Thomas P."/>
            <person name="Vaughn R."/>
            <person name="Weber M.J."/>
            <person name="Wooten L.L."/>
        </authorList>
    </citation>
    <scope>NUCLEOTIDE SEQUENCE [LARGE SCALE GENOMIC DNA]</scope>
    <source>
        <strain>ATCC 33889 / DSM 1251</strain>
    </source>
</reference>
<gene>
    <name evidence="1" type="primary">fabZ</name>
    <name type="ordered locus">Suden_1462</name>
</gene>
<comment type="function">
    <text evidence="1">Involved in unsaturated fatty acids biosynthesis. Catalyzes the dehydration of short chain beta-hydroxyacyl-ACPs and long chain saturated and unsaturated beta-hydroxyacyl-ACPs.</text>
</comment>
<comment type="catalytic activity">
    <reaction evidence="1">
        <text>a (3R)-hydroxyacyl-[ACP] = a (2E)-enoyl-[ACP] + H2O</text>
        <dbReference type="Rhea" id="RHEA:13097"/>
        <dbReference type="Rhea" id="RHEA-COMP:9925"/>
        <dbReference type="Rhea" id="RHEA-COMP:9945"/>
        <dbReference type="ChEBI" id="CHEBI:15377"/>
        <dbReference type="ChEBI" id="CHEBI:78784"/>
        <dbReference type="ChEBI" id="CHEBI:78827"/>
        <dbReference type="EC" id="4.2.1.59"/>
    </reaction>
</comment>
<comment type="subcellular location">
    <subcellularLocation>
        <location evidence="1">Cytoplasm</location>
    </subcellularLocation>
</comment>
<comment type="similarity">
    <text evidence="1">Belongs to the thioester dehydratase family. FabZ subfamily.</text>
</comment>
<organism>
    <name type="scientific">Sulfurimonas denitrificans (strain ATCC 33889 / DSM 1251)</name>
    <name type="common">Thiomicrospira denitrificans (strain ATCC 33889 / DSM 1251)</name>
    <dbReference type="NCBI Taxonomy" id="326298"/>
    <lineage>
        <taxon>Bacteria</taxon>
        <taxon>Pseudomonadati</taxon>
        <taxon>Campylobacterota</taxon>
        <taxon>Epsilonproteobacteria</taxon>
        <taxon>Campylobacterales</taxon>
        <taxon>Sulfurimonadaceae</taxon>
        <taxon>Sulfurimonas</taxon>
    </lineage>
</organism>
<evidence type="ECO:0000255" key="1">
    <source>
        <dbReference type="HAMAP-Rule" id="MF_00406"/>
    </source>
</evidence>
<protein>
    <recommendedName>
        <fullName evidence="1">3-hydroxyacyl-[acyl-carrier-protein] dehydratase FabZ</fullName>
        <ecNumber evidence="1">4.2.1.59</ecNumber>
    </recommendedName>
    <alternativeName>
        <fullName evidence="1">(3R)-hydroxymyristoyl-[acyl-carrier-protein] dehydratase</fullName>
        <shortName evidence="1">(3R)-hydroxymyristoyl-ACP dehydrase</shortName>
    </alternativeName>
    <alternativeName>
        <fullName evidence="1">Beta-hydroxyacyl-ACP dehydratase</fullName>
    </alternativeName>
</protein>
<dbReference type="EC" id="4.2.1.59" evidence="1"/>
<dbReference type="EMBL" id="CP000153">
    <property type="protein sequence ID" value="ABB44739.1"/>
    <property type="molecule type" value="Genomic_DNA"/>
</dbReference>
<dbReference type="SMR" id="Q30QJ2"/>
<dbReference type="STRING" id="326298.Suden_1462"/>
<dbReference type="KEGG" id="tdn:Suden_1462"/>
<dbReference type="eggNOG" id="COG0764">
    <property type="taxonomic scope" value="Bacteria"/>
</dbReference>
<dbReference type="HOGENOM" id="CLU_078912_1_2_7"/>
<dbReference type="OrthoDB" id="9772788at2"/>
<dbReference type="Proteomes" id="UP000002714">
    <property type="component" value="Chromosome"/>
</dbReference>
<dbReference type="GO" id="GO:0005737">
    <property type="term" value="C:cytoplasm"/>
    <property type="evidence" value="ECO:0007669"/>
    <property type="project" value="UniProtKB-SubCell"/>
</dbReference>
<dbReference type="GO" id="GO:0016020">
    <property type="term" value="C:membrane"/>
    <property type="evidence" value="ECO:0007669"/>
    <property type="project" value="GOC"/>
</dbReference>
<dbReference type="GO" id="GO:0019171">
    <property type="term" value="F:(3R)-hydroxyacyl-[acyl-carrier-protein] dehydratase activity"/>
    <property type="evidence" value="ECO:0007669"/>
    <property type="project" value="UniProtKB-EC"/>
</dbReference>
<dbReference type="GO" id="GO:0006633">
    <property type="term" value="P:fatty acid biosynthetic process"/>
    <property type="evidence" value="ECO:0007669"/>
    <property type="project" value="UniProtKB-UniRule"/>
</dbReference>
<dbReference type="GO" id="GO:0009245">
    <property type="term" value="P:lipid A biosynthetic process"/>
    <property type="evidence" value="ECO:0007669"/>
    <property type="project" value="UniProtKB-UniRule"/>
</dbReference>
<dbReference type="CDD" id="cd01288">
    <property type="entry name" value="FabZ"/>
    <property type="match status" value="1"/>
</dbReference>
<dbReference type="FunFam" id="3.10.129.10:FF:000001">
    <property type="entry name" value="3-hydroxyacyl-[acyl-carrier-protein] dehydratase FabZ"/>
    <property type="match status" value="1"/>
</dbReference>
<dbReference type="Gene3D" id="3.10.129.10">
    <property type="entry name" value="Hotdog Thioesterase"/>
    <property type="match status" value="1"/>
</dbReference>
<dbReference type="HAMAP" id="MF_00406">
    <property type="entry name" value="FabZ"/>
    <property type="match status" value="1"/>
</dbReference>
<dbReference type="InterPro" id="IPR013114">
    <property type="entry name" value="FabA_FabZ"/>
</dbReference>
<dbReference type="InterPro" id="IPR010084">
    <property type="entry name" value="FabZ"/>
</dbReference>
<dbReference type="InterPro" id="IPR029069">
    <property type="entry name" value="HotDog_dom_sf"/>
</dbReference>
<dbReference type="NCBIfam" id="TIGR01750">
    <property type="entry name" value="fabZ"/>
    <property type="match status" value="1"/>
</dbReference>
<dbReference type="NCBIfam" id="NF000582">
    <property type="entry name" value="PRK00006.1"/>
    <property type="match status" value="1"/>
</dbReference>
<dbReference type="PANTHER" id="PTHR30272">
    <property type="entry name" value="3-HYDROXYACYL-[ACYL-CARRIER-PROTEIN] DEHYDRATASE"/>
    <property type="match status" value="1"/>
</dbReference>
<dbReference type="PANTHER" id="PTHR30272:SF1">
    <property type="entry name" value="3-HYDROXYACYL-[ACYL-CARRIER-PROTEIN] DEHYDRATASE"/>
    <property type="match status" value="1"/>
</dbReference>
<dbReference type="Pfam" id="PF07977">
    <property type="entry name" value="FabA"/>
    <property type="match status" value="1"/>
</dbReference>
<dbReference type="SUPFAM" id="SSF54637">
    <property type="entry name" value="Thioesterase/thiol ester dehydrase-isomerase"/>
    <property type="match status" value="1"/>
</dbReference>
<feature type="chain" id="PRO_0000230846" description="3-hydroxyacyl-[acyl-carrier-protein] dehydratase FabZ">
    <location>
        <begin position="1"/>
        <end position="149"/>
    </location>
</feature>
<feature type="active site" evidence="1">
    <location>
        <position position="49"/>
    </location>
</feature>
<keyword id="KW-0963">Cytoplasm</keyword>
<keyword id="KW-0441">Lipid A biosynthesis</keyword>
<keyword id="KW-0444">Lipid biosynthesis</keyword>
<keyword id="KW-0443">Lipid metabolism</keyword>
<keyword id="KW-0456">Lyase</keyword>
<keyword id="KW-1185">Reference proteome</keyword>
<proteinExistence type="inferred from homology"/>
<name>FABZ_SULDN</name>
<sequence length="149" mass="16786">MIMDVIEIQKIIPHRYPFLLLDRVTQIKENESLIGYKNITIGDNVFQGHFPGHPIYPGVMILEGMAQAGGILAFKSMGNMTEEEAASKVVYFMSIDRAKFRAPVKPGDRLEYRISVIKNKGQIWVLDGKAYVDDVLVSEAELKAMIVDK</sequence>
<accession>Q30QJ2</accession>